<comment type="function">
    <text evidence="1">Major capsid protein that self assembles to form an icosahedral capsid. Represents around 50% of the total virion protein mass (By similarity).</text>
</comment>
<comment type="subunit">
    <text evidence="1">Homotrimer.</text>
</comment>
<comment type="subcellular location">
    <subcellularLocation>
        <location evidence="2">Virion</location>
    </subcellularLocation>
</comment>
<comment type="PTM">
    <text>The N-terminus is blocked.</text>
</comment>
<comment type="similarity">
    <text evidence="2">Belongs to the NCLDV major capsid protein family.</text>
</comment>
<accession>P22166</accession>
<keyword id="KW-0167">Capsid protein</keyword>
<keyword id="KW-0903">Direct protein sequencing</keyword>
<keyword id="KW-0426">Late protein</keyword>
<keyword id="KW-0946">Virion</keyword>
<organismHost>
    <name type="scientific">Simulium</name>
    <dbReference type="NCBI Taxonomy" id="7191"/>
</organismHost>
<name>MCP_IRV22</name>
<proteinExistence type="evidence at protein level"/>
<dbReference type="EMBL" id="M32799">
    <property type="protein sequence ID" value="AAA66585.1"/>
    <property type="molecule type" value="Genomic_DNA"/>
</dbReference>
<dbReference type="PIR" id="B37075">
    <property type="entry name" value="VCXFSI"/>
</dbReference>
<dbReference type="SMR" id="P22166"/>
<dbReference type="GO" id="GO:0019028">
    <property type="term" value="C:viral capsid"/>
    <property type="evidence" value="ECO:0007669"/>
    <property type="project" value="UniProtKB-KW"/>
</dbReference>
<dbReference type="GO" id="GO:0005198">
    <property type="term" value="F:structural molecule activity"/>
    <property type="evidence" value="ECO:0007669"/>
    <property type="project" value="InterPro"/>
</dbReference>
<dbReference type="Gene3D" id="2.70.9.10">
    <property type="entry name" value="Adenovirus Type 2 Hexon, domain 4"/>
    <property type="match status" value="1"/>
</dbReference>
<dbReference type="Gene3D" id="2.70.9.20">
    <property type="entry name" value="Major capsid protein Vp54"/>
    <property type="match status" value="1"/>
</dbReference>
<dbReference type="InterPro" id="IPR031654">
    <property type="entry name" value="Capsid_N"/>
</dbReference>
<dbReference type="InterPro" id="IPR007542">
    <property type="entry name" value="MCP_C"/>
</dbReference>
<dbReference type="InterPro" id="IPR038519">
    <property type="entry name" value="MCP_C_sf"/>
</dbReference>
<dbReference type="InterPro" id="IPR016112">
    <property type="entry name" value="VP_dsDNA_II"/>
</dbReference>
<dbReference type="Pfam" id="PF16903">
    <property type="entry name" value="Capsid_N"/>
    <property type="match status" value="1"/>
</dbReference>
<dbReference type="Pfam" id="PF04451">
    <property type="entry name" value="Capsid_NCLDV"/>
    <property type="match status" value="1"/>
</dbReference>
<dbReference type="SUPFAM" id="SSF49749">
    <property type="entry name" value="Group II dsDNA viruses VP"/>
    <property type="match status" value="2"/>
</dbReference>
<organism>
    <name type="scientific">Simulium iridescent virus</name>
    <name type="common">IIV-22</name>
    <name type="synonym">Insect iridescent virus type 22</name>
    <dbReference type="NCBI Taxonomy" id="10489"/>
    <lineage>
        <taxon>Viruses</taxon>
        <taxon>Varidnaviria</taxon>
        <taxon>Bamfordvirae</taxon>
        <taxon>Nucleocytoviricota</taxon>
        <taxon>Megaviricetes</taxon>
        <taxon>Pimascovirales</taxon>
        <taxon>Iridoviridae</taxon>
        <taxon>Betairidovirinae</taxon>
        <taxon>Chloriridovirus</taxon>
        <taxon>Invertebrate iridescent virus 22</taxon>
    </lineage>
</organism>
<sequence length="472" mass="51993">MSMSSSNITSGFIDIATFDEIEKYMYGGPTATAYFVREIRKSTWFTQVPVPLSRNTGNAAFGQEWSVSISRAGDYLLQTWLRVNIPPVTLSGLLGNTYSLRWTKNLMHNLIREATITFNDLVAARFDNYHLDFWSAFTVPASKRNGYDNMIGNVSSLINPVAPGGTLGSVGGINLNLPLPFFFSRDTGVALPTAALPYNEMQINFNFRDWHELLILTNSALVPPASSYVSIVVGTHISAAPVLGPVQVWANYAIVSNEERRRMGCAIRDILIEQVQTAPRQNYVPLTNASPTFDIRFSHAIKALFFAVRNKTSAAEWSNYATSSPVVTGATVNYEPTGSFDPIANTTLIYENTNRLGAMGSDYFSLINPFYHAPTIPSFIGYHLYSYSLHFYDLDPMGSTNYGKLTNVFVVPAASSAAISAAGGTGGQAGSDYAQSYEFVIVAVNNNIVRIENSLVRNRRRWSREGPMVMVC</sequence>
<reference key="1">
    <citation type="journal article" date="1990" name="Virology">
        <title>Identification and characterization of the gene encoding the major structural protein of insect iridescent virus type 22.</title>
        <authorList>
            <person name="Cameron I.R."/>
        </authorList>
    </citation>
    <scope>NUCLEOTIDE SEQUENCE [GENOMIC DNA]</scope>
    <scope>PARTIAL PROTEIN SEQUENCE</scope>
</reference>
<feature type="chain" id="PRO_0000222384" description="Major capsid protein">
    <location>
        <begin position="1"/>
        <end position="472"/>
    </location>
</feature>
<gene>
    <name type="primary">MCP</name>
</gene>
<protein>
    <recommendedName>
        <fullName>Major capsid protein</fullName>
        <shortName>MCP</shortName>
    </recommendedName>
    <alternativeName>
        <fullName>P50</fullName>
    </alternativeName>
</protein>
<evidence type="ECO:0000250" key="1"/>
<evidence type="ECO:0000305" key="2"/>